<gene>
    <name evidence="1" type="primary">rnfA</name>
    <name type="ordered locus">VIBHAR_02964</name>
</gene>
<accession>A7MVC5</accession>
<evidence type="ECO:0000255" key="1">
    <source>
        <dbReference type="HAMAP-Rule" id="MF_00459"/>
    </source>
</evidence>
<protein>
    <recommendedName>
        <fullName evidence="1">Ion-translocating oxidoreductase complex subunit A</fullName>
        <ecNumber evidence="1">7.-.-.-</ecNumber>
    </recommendedName>
    <alternativeName>
        <fullName evidence="1">Rnf electron transport complex subunit A</fullName>
    </alternativeName>
</protein>
<comment type="function">
    <text evidence="1">Part of a membrane-bound complex that couples electron transfer with translocation of ions across the membrane.</text>
</comment>
<comment type="subunit">
    <text evidence="1">The complex is composed of six subunits: RnfA, RnfB, RnfC, RnfD, RnfE and RnfG.</text>
</comment>
<comment type="subcellular location">
    <subcellularLocation>
        <location evidence="1">Cell inner membrane</location>
        <topology evidence="1">Multi-pass membrane protein</topology>
    </subcellularLocation>
</comment>
<comment type="similarity">
    <text evidence="1">Belongs to the NqrDE/RnfAE family.</text>
</comment>
<name>RNFA_VIBC1</name>
<dbReference type="EC" id="7.-.-.-" evidence="1"/>
<dbReference type="EMBL" id="CP000789">
    <property type="protein sequence ID" value="ABU71915.1"/>
    <property type="molecule type" value="Genomic_DNA"/>
</dbReference>
<dbReference type="RefSeq" id="WP_012128496.1">
    <property type="nucleotide sequence ID" value="NC_009783.1"/>
</dbReference>
<dbReference type="SMR" id="A7MVC5"/>
<dbReference type="KEGG" id="vha:VIBHAR_02964"/>
<dbReference type="PATRIC" id="fig|338187.25.peg.3223"/>
<dbReference type="Proteomes" id="UP000008152">
    <property type="component" value="Chromosome I"/>
</dbReference>
<dbReference type="GO" id="GO:0005886">
    <property type="term" value="C:plasma membrane"/>
    <property type="evidence" value="ECO:0007669"/>
    <property type="project" value="UniProtKB-SubCell"/>
</dbReference>
<dbReference type="GO" id="GO:0022900">
    <property type="term" value="P:electron transport chain"/>
    <property type="evidence" value="ECO:0007669"/>
    <property type="project" value="UniProtKB-UniRule"/>
</dbReference>
<dbReference type="HAMAP" id="MF_00459">
    <property type="entry name" value="RsxA_RnfA"/>
    <property type="match status" value="1"/>
</dbReference>
<dbReference type="InterPro" id="IPR011293">
    <property type="entry name" value="Ion_transpt_RnfA/RsxA"/>
</dbReference>
<dbReference type="InterPro" id="IPR003667">
    <property type="entry name" value="NqrDE/RnfAE"/>
</dbReference>
<dbReference type="InterPro" id="IPR050133">
    <property type="entry name" value="NqrDE/RnfAE_oxidrdctase"/>
</dbReference>
<dbReference type="NCBIfam" id="NF003481">
    <property type="entry name" value="PRK05151.1"/>
    <property type="match status" value="1"/>
</dbReference>
<dbReference type="NCBIfam" id="TIGR01943">
    <property type="entry name" value="rnfA"/>
    <property type="match status" value="1"/>
</dbReference>
<dbReference type="PANTHER" id="PTHR30335">
    <property type="entry name" value="INTEGRAL MEMBRANE PROTEIN OF SOXR-REDUCING COMPLEX"/>
    <property type="match status" value="1"/>
</dbReference>
<dbReference type="PANTHER" id="PTHR30335:SF0">
    <property type="entry name" value="ION-TRANSLOCATING OXIDOREDUCTASE COMPLEX SUBUNIT A"/>
    <property type="match status" value="1"/>
</dbReference>
<dbReference type="Pfam" id="PF02508">
    <property type="entry name" value="Rnf-Nqr"/>
    <property type="match status" value="1"/>
</dbReference>
<dbReference type="PIRSF" id="PIRSF006102">
    <property type="entry name" value="NQR_DE"/>
    <property type="match status" value="1"/>
</dbReference>
<keyword id="KW-0997">Cell inner membrane</keyword>
<keyword id="KW-1003">Cell membrane</keyword>
<keyword id="KW-0249">Electron transport</keyword>
<keyword id="KW-0472">Membrane</keyword>
<keyword id="KW-1278">Translocase</keyword>
<keyword id="KW-0812">Transmembrane</keyword>
<keyword id="KW-1133">Transmembrane helix</keyword>
<keyword id="KW-0813">Transport</keyword>
<proteinExistence type="inferred from homology"/>
<feature type="chain" id="PRO_1000013563" description="Ion-translocating oxidoreductase complex subunit A">
    <location>
        <begin position="1"/>
        <end position="192"/>
    </location>
</feature>
<feature type="transmembrane region" description="Helical" evidence="1">
    <location>
        <begin position="5"/>
        <end position="25"/>
    </location>
</feature>
<feature type="transmembrane region" description="Helical" evidence="1">
    <location>
        <begin position="39"/>
        <end position="59"/>
    </location>
</feature>
<feature type="transmembrane region" description="Helical" evidence="1">
    <location>
        <begin position="67"/>
        <end position="87"/>
    </location>
</feature>
<feature type="transmembrane region" description="Helical" evidence="1">
    <location>
        <begin position="102"/>
        <end position="122"/>
    </location>
</feature>
<feature type="transmembrane region" description="Helical" evidence="1">
    <location>
        <begin position="134"/>
        <end position="154"/>
    </location>
</feature>
<feature type="transmembrane region" description="Helical" evidence="1">
    <location>
        <begin position="171"/>
        <end position="191"/>
    </location>
</feature>
<reference key="1">
    <citation type="submission" date="2007-08" db="EMBL/GenBank/DDBJ databases">
        <authorList>
            <consortium name="The Vibrio harveyi Genome Sequencing Project"/>
            <person name="Bassler B."/>
            <person name="Clifton S.W."/>
            <person name="Fulton L."/>
            <person name="Delehaunty K."/>
            <person name="Fronick C."/>
            <person name="Harrison M."/>
            <person name="Markivic C."/>
            <person name="Fulton R."/>
            <person name="Tin-Wollam A.-M."/>
            <person name="Shah N."/>
            <person name="Pepin K."/>
            <person name="Nash W."/>
            <person name="Thiruvilangam P."/>
            <person name="Bhonagiri V."/>
            <person name="Waters C."/>
            <person name="Tu K.C."/>
            <person name="Irgon J."/>
            <person name="Wilson R.K."/>
        </authorList>
    </citation>
    <scope>NUCLEOTIDE SEQUENCE [LARGE SCALE GENOMIC DNA]</scope>
    <source>
        <strain>ATCC BAA-1116 / BB120</strain>
    </source>
</reference>
<organism>
    <name type="scientific">Vibrio campbellii (strain ATCC BAA-1116)</name>
    <dbReference type="NCBI Taxonomy" id="2902295"/>
    <lineage>
        <taxon>Bacteria</taxon>
        <taxon>Pseudomonadati</taxon>
        <taxon>Pseudomonadota</taxon>
        <taxon>Gammaproteobacteria</taxon>
        <taxon>Vibrionales</taxon>
        <taxon>Vibrionaceae</taxon>
        <taxon>Vibrio</taxon>
    </lineage>
</organism>
<sequence>MTEYILLLVGTVLVNNFVLVKFLGLCPFMGVSKKLETAIGMGLATTFVLTLASVCAYLVESYVLRPLGIEYLRTMSFILVIAVVVQFTEMVVHKTSPTLYRLLGIFLPLITTNCAVLGVALLNINENHNFIESIIYGFGAAVGFSLVLILFASMRERIAAADVPVPFRGASIAMITAGLMSLAFMGFTGLVK</sequence>